<gene>
    <name evidence="1" type="primary">rplT</name>
    <name type="ordered locus">BCE_4704</name>
</gene>
<evidence type="ECO:0000255" key="1">
    <source>
        <dbReference type="HAMAP-Rule" id="MF_00382"/>
    </source>
</evidence>
<evidence type="ECO:0000305" key="2"/>
<reference key="1">
    <citation type="journal article" date="2004" name="Nucleic Acids Res.">
        <title>The genome sequence of Bacillus cereus ATCC 10987 reveals metabolic adaptations and a large plasmid related to Bacillus anthracis pXO1.</title>
        <authorList>
            <person name="Rasko D.A."/>
            <person name="Ravel J."/>
            <person name="Oekstad O.A."/>
            <person name="Helgason E."/>
            <person name="Cer R.Z."/>
            <person name="Jiang L."/>
            <person name="Shores K.A."/>
            <person name="Fouts D.E."/>
            <person name="Tourasse N.J."/>
            <person name="Angiuoli S.V."/>
            <person name="Kolonay J.F."/>
            <person name="Nelson W.C."/>
            <person name="Kolstoe A.-B."/>
            <person name="Fraser C.M."/>
            <person name="Read T.D."/>
        </authorList>
    </citation>
    <scope>NUCLEOTIDE SEQUENCE [LARGE SCALE GENOMIC DNA]</scope>
    <source>
        <strain>ATCC 10987 / NRS 248</strain>
    </source>
</reference>
<comment type="function">
    <text evidence="1">Binds directly to 23S ribosomal RNA and is necessary for the in vitro assembly process of the 50S ribosomal subunit. It is not involved in the protein synthesizing functions of that subunit.</text>
</comment>
<comment type="similarity">
    <text evidence="1">Belongs to the bacterial ribosomal protein bL20 family.</text>
</comment>
<feature type="chain" id="PRO_0000177112" description="Large ribosomal subunit protein bL20">
    <location>
        <begin position="1"/>
        <end position="118"/>
    </location>
</feature>
<dbReference type="EMBL" id="AE017194">
    <property type="protein sequence ID" value="AAS43605.1"/>
    <property type="molecule type" value="Genomic_DNA"/>
</dbReference>
<dbReference type="SMR" id="Q72ZG4"/>
<dbReference type="KEGG" id="bca:BCE_4704"/>
<dbReference type="HOGENOM" id="CLU_123265_0_1_9"/>
<dbReference type="Proteomes" id="UP000002527">
    <property type="component" value="Chromosome"/>
</dbReference>
<dbReference type="GO" id="GO:1990904">
    <property type="term" value="C:ribonucleoprotein complex"/>
    <property type="evidence" value="ECO:0007669"/>
    <property type="project" value="UniProtKB-KW"/>
</dbReference>
<dbReference type="GO" id="GO:0005840">
    <property type="term" value="C:ribosome"/>
    <property type="evidence" value="ECO:0007669"/>
    <property type="project" value="UniProtKB-KW"/>
</dbReference>
<dbReference type="GO" id="GO:0019843">
    <property type="term" value="F:rRNA binding"/>
    <property type="evidence" value="ECO:0007669"/>
    <property type="project" value="UniProtKB-UniRule"/>
</dbReference>
<dbReference type="GO" id="GO:0003735">
    <property type="term" value="F:structural constituent of ribosome"/>
    <property type="evidence" value="ECO:0007669"/>
    <property type="project" value="InterPro"/>
</dbReference>
<dbReference type="GO" id="GO:0000027">
    <property type="term" value="P:ribosomal large subunit assembly"/>
    <property type="evidence" value="ECO:0007669"/>
    <property type="project" value="UniProtKB-UniRule"/>
</dbReference>
<dbReference type="GO" id="GO:0006412">
    <property type="term" value="P:translation"/>
    <property type="evidence" value="ECO:0007669"/>
    <property type="project" value="InterPro"/>
</dbReference>
<dbReference type="CDD" id="cd07026">
    <property type="entry name" value="Ribosomal_L20"/>
    <property type="match status" value="1"/>
</dbReference>
<dbReference type="FunFam" id="1.10.1900.20:FF:000001">
    <property type="entry name" value="50S ribosomal protein L20"/>
    <property type="match status" value="1"/>
</dbReference>
<dbReference type="Gene3D" id="6.10.160.10">
    <property type="match status" value="1"/>
</dbReference>
<dbReference type="Gene3D" id="1.10.1900.20">
    <property type="entry name" value="Ribosomal protein L20"/>
    <property type="match status" value="1"/>
</dbReference>
<dbReference type="HAMAP" id="MF_00382">
    <property type="entry name" value="Ribosomal_bL20"/>
    <property type="match status" value="1"/>
</dbReference>
<dbReference type="InterPro" id="IPR005813">
    <property type="entry name" value="Ribosomal_bL20"/>
</dbReference>
<dbReference type="InterPro" id="IPR049946">
    <property type="entry name" value="RIBOSOMAL_L20_CS"/>
</dbReference>
<dbReference type="InterPro" id="IPR035566">
    <property type="entry name" value="Ribosomal_protein_bL20_C"/>
</dbReference>
<dbReference type="NCBIfam" id="TIGR01032">
    <property type="entry name" value="rplT_bact"/>
    <property type="match status" value="1"/>
</dbReference>
<dbReference type="PANTHER" id="PTHR10986">
    <property type="entry name" value="39S RIBOSOMAL PROTEIN L20"/>
    <property type="match status" value="1"/>
</dbReference>
<dbReference type="Pfam" id="PF00453">
    <property type="entry name" value="Ribosomal_L20"/>
    <property type="match status" value="1"/>
</dbReference>
<dbReference type="PRINTS" id="PR00062">
    <property type="entry name" value="RIBOSOMALL20"/>
</dbReference>
<dbReference type="SUPFAM" id="SSF74731">
    <property type="entry name" value="Ribosomal protein L20"/>
    <property type="match status" value="1"/>
</dbReference>
<dbReference type="PROSITE" id="PS00937">
    <property type="entry name" value="RIBOSOMAL_L20"/>
    <property type="match status" value="1"/>
</dbReference>
<name>RL20_BACC1</name>
<sequence length="118" mass="13612">MPRVKGGTVTRQRRKKVIKLAKGYYGSKNTLFKVANQQVMKSLMYAFRDRRQKKRDFRKLWITRINAAARMNGLSYSRLMHGLKNAGIEVNRKMLADLAVHDEKAFAELATVAKNNIN</sequence>
<organism>
    <name type="scientific">Bacillus cereus (strain ATCC 10987 / NRS 248)</name>
    <dbReference type="NCBI Taxonomy" id="222523"/>
    <lineage>
        <taxon>Bacteria</taxon>
        <taxon>Bacillati</taxon>
        <taxon>Bacillota</taxon>
        <taxon>Bacilli</taxon>
        <taxon>Bacillales</taxon>
        <taxon>Bacillaceae</taxon>
        <taxon>Bacillus</taxon>
        <taxon>Bacillus cereus group</taxon>
    </lineage>
</organism>
<proteinExistence type="inferred from homology"/>
<protein>
    <recommendedName>
        <fullName evidence="1">Large ribosomal subunit protein bL20</fullName>
    </recommendedName>
    <alternativeName>
        <fullName evidence="2">50S ribosomal protein L20</fullName>
    </alternativeName>
</protein>
<accession>Q72ZG4</accession>
<keyword id="KW-0687">Ribonucleoprotein</keyword>
<keyword id="KW-0689">Ribosomal protein</keyword>
<keyword id="KW-0694">RNA-binding</keyword>
<keyword id="KW-0699">rRNA-binding</keyword>